<keyword id="KW-0256">Endoplasmic reticulum</keyword>
<keyword id="KW-0472">Membrane</keyword>
<keyword id="KW-0597">Phosphoprotein</keyword>
<keyword id="KW-1185">Reference proteome</keyword>
<keyword id="KW-0812">Transmembrane</keyword>
<keyword id="KW-1133">Transmembrane helix</keyword>
<sequence>MALECDSTIVFPRPLTRLVKCDLELRNTAPYPIGFKVKTTAPKQYCVRPNGGRIEANSAVSVEVILQPLDHEPAPGTKCRDKFLVQSTELKPELQGMDIADIWTQVSKANISERKIRCVYSEGPSTANAHANAHHQPAQTTTTSIPTSATDNYTTVNGNVNQSYSKGIDGTALPSTHANPVAAPSTATTQHTQLPKTSAVSHQKPHEAPSTAVKAPTATVAENEPYPKPQSVPTTTSPNNENNALRSTANVINNTRQSTATSPSMFAGNSGNQIGLARVSSSFGRPTSGAKVVPQIHNTVTVQTAFLLAIICFLIGLLF</sequence>
<name>SCS22_SCHPO</name>
<organism>
    <name type="scientific">Schizosaccharomyces pombe (strain 972 / ATCC 24843)</name>
    <name type="common">Fission yeast</name>
    <dbReference type="NCBI Taxonomy" id="284812"/>
    <lineage>
        <taxon>Eukaryota</taxon>
        <taxon>Fungi</taxon>
        <taxon>Dikarya</taxon>
        <taxon>Ascomycota</taxon>
        <taxon>Taphrinomycotina</taxon>
        <taxon>Schizosaccharomycetes</taxon>
        <taxon>Schizosaccharomycetales</taxon>
        <taxon>Schizosaccharomycetaceae</taxon>
        <taxon>Schizosaccharomyces</taxon>
    </lineage>
</organism>
<protein>
    <recommendedName>
        <fullName>Vesicle-associated membrane protein-associated protein scs22</fullName>
        <shortName>VAMP-associated protein scs22</shortName>
    </recommendedName>
</protein>
<evidence type="ECO:0000250" key="1">
    <source>
        <dbReference type="UniProtKB" id="P40075"/>
    </source>
</evidence>
<evidence type="ECO:0000255" key="2"/>
<evidence type="ECO:0000255" key="3">
    <source>
        <dbReference type="PROSITE-ProRule" id="PRU00132"/>
    </source>
</evidence>
<evidence type="ECO:0000256" key="4">
    <source>
        <dbReference type="SAM" id="MobiDB-lite"/>
    </source>
</evidence>
<evidence type="ECO:0000269" key="5">
    <source>
    </source>
</evidence>
<evidence type="ECO:0000269" key="6">
    <source>
    </source>
</evidence>
<evidence type="ECO:0000269" key="7">
    <source>
    </source>
</evidence>
<evidence type="ECO:0000269" key="8">
    <source>
    </source>
</evidence>
<evidence type="ECO:0000269" key="9">
    <source>
    </source>
</evidence>
<evidence type="ECO:0000269" key="10">
    <source>
    </source>
</evidence>
<evidence type="ECO:0000269" key="11">
    <source ref="7"/>
</evidence>
<evidence type="ECO:0000305" key="12"/>
<gene>
    <name type="primary">scs22</name>
    <name type="ORF">SPAC17C9.12</name>
</gene>
<proteinExistence type="evidence at protein level"/>
<feature type="chain" id="PRO_0000213482" description="Vesicle-associated membrane protein-associated protein scs22">
    <location>
        <begin position="1"/>
        <end position="319"/>
    </location>
</feature>
<feature type="topological domain" description="Cytoplasmic" evidence="12">
    <location>
        <begin position="1"/>
        <end position="298"/>
    </location>
</feature>
<feature type="transmembrane region" description="Helical; Anchor for type IV membrane protein" evidence="2">
    <location>
        <begin position="299"/>
        <end position="319"/>
    </location>
</feature>
<feature type="domain" description="MSP" evidence="3">
    <location>
        <begin position="1"/>
        <end position="121"/>
    </location>
</feature>
<feature type="region of interest" description="Disordered" evidence="4">
    <location>
        <begin position="127"/>
        <end position="244"/>
    </location>
</feature>
<feature type="compositionally biased region" description="Low complexity" evidence="4">
    <location>
        <begin position="127"/>
        <end position="150"/>
    </location>
</feature>
<feature type="compositionally biased region" description="Polar residues" evidence="4">
    <location>
        <begin position="151"/>
        <end position="165"/>
    </location>
</feature>
<feature type="compositionally biased region" description="Polar residues" evidence="4">
    <location>
        <begin position="185"/>
        <end position="201"/>
    </location>
</feature>
<feature type="compositionally biased region" description="Polar residues" evidence="4">
    <location>
        <begin position="231"/>
        <end position="244"/>
    </location>
</feature>
<feature type="modified residue" description="Phosphothreonine" evidence="5">
    <location>
        <position position="236"/>
    </location>
</feature>
<feature type="modified residue" description="Phosphoserine" evidence="5">
    <location>
        <position position="237"/>
    </location>
</feature>
<feature type="modified residue" description="Phosphoserine" evidence="5">
    <location>
        <position position="281"/>
    </location>
</feature>
<accession>Q10484</accession>
<dbReference type="EMBL" id="CU329670">
    <property type="protein sequence ID" value="CAA97357.1"/>
    <property type="molecule type" value="Genomic_DNA"/>
</dbReference>
<dbReference type="PIR" id="T11592">
    <property type="entry name" value="T11592"/>
</dbReference>
<dbReference type="RefSeq" id="NP_594594.1">
    <property type="nucleotide sequence ID" value="NM_001020022.2"/>
</dbReference>
<dbReference type="SMR" id="Q10484"/>
<dbReference type="BioGRID" id="278654">
    <property type="interactions" value="14"/>
</dbReference>
<dbReference type="FunCoup" id="Q10484">
    <property type="interactions" value="20"/>
</dbReference>
<dbReference type="STRING" id="284812.Q10484"/>
<dbReference type="iPTMnet" id="Q10484"/>
<dbReference type="PaxDb" id="4896-SPAC17C9.12.1"/>
<dbReference type="EnsemblFungi" id="SPAC17C9.12.1">
    <property type="protein sequence ID" value="SPAC17C9.12.1:pep"/>
    <property type="gene ID" value="SPAC17C9.12"/>
</dbReference>
<dbReference type="GeneID" id="2542179"/>
<dbReference type="KEGG" id="spo:2542179"/>
<dbReference type="PomBase" id="SPAC17C9.12">
    <property type="gene designation" value="scs22"/>
</dbReference>
<dbReference type="VEuPathDB" id="FungiDB:SPAC17C9.12"/>
<dbReference type="eggNOG" id="KOG0439">
    <property type="taxonomic scope" value="Eukaryota"/>
</dbReference>
<dbReference type="HOGENOM" id="CLU_032848_1_1_1"/>
<dbReference type="InParanoid" id="Q10484"/>
<dbReference type="OMA" id="VVPQIHN"/>
<dbReference type="Reactome" id="R-SPO-9013106">
    <property type="pathway name" value="RHOC GTPase cycle"/>
</dbReference>
<dbReference type="PRO" id="PR:Q10484"/>
<dbReference type="Proteomes" id="UP000002485">
    <property type="component" value="Chromosome I"/>
</dbReference>
<dbReference type="GO" id="GO:0032541">
    <property type="term" value="C:cortical endoplasmic reticulum"/>
    <property type="evidence" value="ECO:0000314"/>
    <property type="project" value="PomBase"/>
</dbReference>
<dbReference type="GO" id="GO:0160219">
    <property type="term" value="C:cortical endoplasmic reticulum membrane"/>
    <property type="evidence" value="ECO:0000269"/>
    <property type="project" value="PomBase"/>
</dbReference>
<dbReference type="GO" id="GO:0005829">
    <property type="term" value="C:cytosol"/>
    <property type="evidence" value="ECO:0007005"/>
    <property type="project" value="PomBase"/>
</dbReference>
<dbReference type="GO" id="GO:0005789">
    <property type="term" value="C:endoplasmic reticulum membrane"/>
    <property type="evidence" value="ECO:0000318"/>
    <property type="project" value="GO_Central"/>
</dbReference>
<dbReference type="GO" id="GO:0016328">
    <property type="term" value="C:lateral plasma membrane"/>
    <property type="evidence" value="ECO:0000314"/>
    <property type="project" value="PomBase"/>
</dbReference>
<dbReference type="GO" id="GO:0005635">
    <property type="term" value="C:nuclear envelope"/>
    <property type="evidence" value="ECO:0000314"/>
    <property type="project" value="PomBase"/>
</dbReference>
<dbReference type="GO" id="GO:0005886">
    <property type="term" value="C:plasma membrane"/>
    <property type="evidence" value="ECO:0000318"/>
    <property type="project" value="GO_Central"/>
</dbReference>
<dbReference type="GO" id="GO:0140506">
    <property type="term" value="F:endoplasmic reticulum-autophagosome adaptor activity"/>
    <property type="evidence" value="ECO:0000353"/>
    <property type="project" value="PomBase"/>
</dbReference>
<dbReference type="GO" id="GO:0160214">
    <property type="term" value="F:endoplasmic reticulum-plasma membrane adaptor activity"/>
    <property type="evidence" value="ECO:0000314"/>
    <property type="project" value="PomBase"/>
</dbReference>
<dbReference type="GO" id="GO:0035091">
    <property type="term" value="F:phosphatidylinositol binding"/>
    <property type="evidence" value="ECO:0000269"/>
    <property type="project" value="PomBase"/>
</dbReference>
<dbReference type="GO" id="GO:0001786">
    <property type="term" value="F:phosphatidylserine binding"/>
    <property type="evidence" value="ECO:0000269"/>
    <property type="project" value="PomBase"/>
</dbReference>
<dbReference type="GO" id="GO:0043495">
    <property type="term" value="F:protein-membrane adaptor activity"/>
    <property type="evidence" value="ECO:0000318"/>
    <property type="project" value="GO_Central"/>
</dbReference>
<dbReference type="GO" id="GO:0090158">
    <property type="term" value="P:endoplasmic reticulum membrane organization"/>
    <property type="evidence" value="ECO:0000318"/>
    <property type="project" value="GO_Central"/>
</dbReference>
<dbReference type="GO" id="GO:0061817">
    <property type="term" value="P:endoplasmic reticulum-plasma membrane tethering"/>
    <property type="evidence" value="ECO:0000315"/>
    <property type="project" value="PomBase"/>
</dbReference>
<dbReference type="GO" id="GO:0051685">
    <property type="term" value="P:maintenance of ER location"/>
    <property type="evidence" value="ECO:0000315"/>
    <property type="project" value="PomBase"/>
</dbReference>
<dbReference type="GO" id="GO:1902647">
    <property type="term" value="P:negative regulation of 1-phosphatidyl-1D-myo-inositol 4,5-bisphosphate biosynthetic process"/>
    <property type="evidence" value="ECO:0000315"/>
    <property type="project" value="PomBase"/>
</dbReference>
<dbReference type="GO" id="GO:0007009">
    <property type="term" value="P:plasma membrane organization"/>
    <property type="evidence" value="ECO:0000315"/>
    <property type="project" value="PomBase"/>
</dbReference>
<dbReference type="GO" id="GO:0061709">
    <property type="term" value="P:reticulophagy"/>
    <property type="evidence" value="ECO:0000315"/>
    <property type="project" value="PomBase"/>
</dbReference>
<dbReference type="FunFam" id="2.60.40.10:FF:000813">
    <property type="entry name" value="Vesicle-associated protein 1-1"/>
    <property type="match status" value="1"/>
</dbReference>
<dbReference type="Gene3D" id="2.60.40.10">
    <property type="entry name" value="Immunoglobulins"/>
    <property type="match status" value="1"/>
</dbReference>
<dbReference type="InterPro" id="IPR013783">
    <property type="entry name" value="Ig-like_fold"/>
</dbReference>
<dbReference type="InterPro" id="IPR000535">
    <property type="entry name" value="MSP_dom"/>
</dbReference>
<dbReference type="InterPro" id="IPR008962">
    <property type="entry name" value="PapD-like_sf"/>
</dbReference>
<dbReference type="InterPro" id="IPR016763">
    <property type="entry name" value="VAP"/>
</dbReference>
<dbReference type="PANTHER" id="PTHR10809:SF6">
    <property type="entry name" value="AT11025P-RELATED"/>
    <property type="match status" value="1"/>
</dbReference>
<dbReference type="PANTHER" id="PTHR10809">
    <property type="entry name" value="VESICLE-ASSOCIATED MEMBRANE PROTEIN-ASSOCIATED PROTEIN"/>
    <property type="match status" value="1"/>
</dbReference>
<dbReference type="Pfam" id="PF00635">
    <property type="entry name" value="Motile_Sperm"/>
    <property type="match status" value="1"/>
</dbReference>
<dbReference type="PIRSF" id="PIRSF019693">
    <property type="entry name" value="VAMP-associated"/>
    <property type="match status" value="1"/>
</dbReference>
<dbReference type="SUPFAM" id="SSF49354">
    <property type="entry name" value="PapD-like"/>
    <property type="match status" value="1"/>
</dbReference>
<dbReference type="PROSITE" id="PS50202">
    <property type="entry name" value="MSP"/>
    <property type="match status" value="1"/>
</dbReference>
<reference key="1">
    <citation type="journal article" date="2002" name="Nature">
        <title>The genome sequence of Schizosaccharomyces pombe.</title>
        <authorList>
            <person name="Wood V."/>
            <person name="Gwilliam R."/>
            <person name="Rajandream M.A."/>
            <person name="Lyne M.H."/>
            <person name="Lyne R."/>
            <person name="Stewart A."/>
            <person name="Sgouros J.G."/>
            <person name="Peat N."/>
            <person name="Hayles J."/>
            <person name="Baker S.G."/>
            <person name="Basham D."/>
            <person name="Bowman S."/>
            <person name="Brooks K."/>
            <person name="Brown D."/>
            <person name="Brown S."/>
            <person name="Chillingworth T."/>
            <person name="Churcher C.M."/>
            <person name="Collins M."/>
            <person name="Connor R."/>
            <person name="Cronin A."/>
            <person name="Davis P."/>
            <person name="Feltwell T."/>
            <person name="Fraser A."/>
            <person name="Gentles S."/>
            <person name="Goble A."/>
            <person name="Hamlin N."/>
            <person name="Harris D.E."/>
            <person name="Hidalgo J."/>
            <person name="Hodgson G."/>
            <person name="Holroyd S."/>
            <person name="Hornsby T."/>
            <person name="Howarth S."/>
            <person name="Huckle E.J."/>
            <person name="Hunt S."/>
            <person name="Jagels K."/>
            <person name="James K.D."/>
            <person name="Jones L."/>
            <person name="Jones M."/>
            <person name="Leather S."/>
            <person name="McDonald S."/>
            <person name="McLean J."/>
            <person name="Mooney P."/>
            <person name="Moule S."/>
            <person name="Mungall K.L."/>
            <person name="Murphy L.D."/>
            <person name="Niblett D."/>
            <person name="Odell C."/>
            <person name="Oliver K."/>
            <person name="O'Neil S."/>
            <person name="Pearson D."/>
            <person name="Quail M.A."/>
            <person name="Rabbinowitsch E."/>
            <person name="Rutherford K.M."/>
            <person name="Rutter S."/>
            <person name="Saunders D."/>
            <person name="Seeger K."/>
            <person name="Sharp S."/>
            <person name="Skelton J."/>
            <person name="Simmonds M.N."/>
            <person name="Squares R."/>
            <person name="Squares S."/>
            <person name="Stevens K."/>
            <person name="Taylor K."/>
            <person name="Taylor R.G."/>
            <person name="Tivey A."/>
            <person name="Walsh S.V."/>
            <person name="Warren T."/>
            <person name="Whitehead S."/>
            <person name="Woodward J.R."/>
            <person name="Volckaert G."/>
            <person name="Aert R."/>
            <person name="Robben J."/>
            <person name="Grymonprez B."/>
            <person name="Weltjens I."/>
            <person name="Vanstreels E."/>
            <person name="Rieger M."/>
            <person name="Schaefer M."/>
            <person name="Mueller-Auer S."/>
            <person name="Gabel C."/>
            <person name="Fuchs M."/>
            <person name="Duesterhoeft A."/>
            <person name="Fritzc C."/>
            <person name="Holzer E."/>
            <person name="Moestl D."/>
            <person name="Hilbert H."/>
            <person name="Borzym K."/>
            <person name="Langer I."/>
            <person name="Beck A."/>
            <person name="Lehrach H."/>
            <person name="Reinhardt R."/>
            <person name="Pohl T.M."/>
            <person name="Eger P."/>
            <person name="Zimmermann W."/>
            <person name="Wedler H."/>
            <person name="Wambutt R."/>
            <person name="Purnelle B."/>
            <person name="Goffeau A."/>
            <person name="Cadieu E."/>
            <person name="Dreano S."/>
            <person name="Gloux S."/>
            <person name="Lelaure V."/>
            <person name="Mottier S."/>
            <person name="Galibert F."/>
            <person name="Aves S.J."/>
            <person name="Xiang Z."/>
            <person name="Hunt C."/>
            <person name="Moore K."/>
            <person name="Hurst S.M."/>
            <person name="Lucas M."/>
            <person name="Rochet M."/>
            <person name="Gaillardin C."/>
            <person name="Tallada V.A."/>
            <person name="Garzon A."/>
            <person name="Thode G."/>
            <person name="Daga R.R."/>
            <person name="Cruzado L."/>
            <person name="Jimenez J."/>
            <person name="Sanchez M."/>
            <person name="del Rey F."/>
            <person name="Benito J."/>
            <person name="Dominguez A."/>
            <person name="Revuelta J.L."/>
            <person name="Moreno S."/>
            <person name="Armstrong J."/>
            <person name="Forsburg S.L."/>
            <person name="Cerutti L."/>
            <person name="Lowe T."/>
            <person name="McCombie W.R."/>
            <person name="Paulsen I."/>
            <person name="Potashkin J."/>
            <person name="Shpakovski G.V."/>
            <person name="Ussery D."/>
            <person name="Barrell B.G."/>
            <person name="Nurse P."/>
        </authorList>
    </citation>
    <scope>NUCLEOTIDE SEQUENCE [LARGE SCALE GENOMIC DNA]</scope>
    <source>
        <strain>972 / ATCC 24843</strain>
    </source>
</reference>
<reference key="2">
    <citation type="journal article" date="2008" name="J. Proteome Res.">
        <title>Phosphoproteome analysis of fission yeast.</title>
        <authorList>
            <person name="Wilson-Grady J.T."/>
            <person name="Villen J."/>
            <person name="Gygi S.P."/>
        </authorList>
    </citation>
    <scope>PHOSPHORYLATION [LARGE SCALE ANALYSIS] AT THR-236; SER-237 AND SER-281</scope>
    <scope>IDENTIFICATION BY MASS SPECTROMETRY</scope>
</reference>
<reference key="3">
    <citation type="journal article" date="2012" name="Curr. Biol.">
        <title>Plasma membrane tethering of the cortical ER necessitates its finely reticulated architecture.</title>
        <authorList>
            <person name="Zhang D."/>
            <person name="Vjestica A."/>
            <person name="Oliferenko S."/>
        </authorList>
    </citation>
    <scope>FUNCTION</scope>
    <scope>DISRUPTION PHENOTYPE</scope>
</reference>
<reference key="4">
    <citation type="journal article" date="2016" name="Curr. Biol.">
        <title>ER-PM Contacts Define Actomyosin Kinetics for Proper Contractile Ring Assembly.</title>
        <authorList>
            <person name="Zhang D."/>
            <person name="Bidone T.C."/>
            <person name="Vavylonis D."/>
        </authorList>
    </citation>
    <scope>FUNCTION</scope>
    <scope>DISRUPTION PHENOTYPE</scope>
</reference>
<reference key="5">
    <citation type="journal article" date="2018" name="Curr. Biol.">
        <title>ER-PM contacts restrict exocytic sites for polarized morphogenesis.</title>
        <authorList>
            <person name="Ng A.Y.E."/>
            <person name="Ng A.Q.E."/>
            <person name="Zhang D."/>
        </authorList>
    </citation>
    <scope>FUNCTION</scope>
    <scope>DISRUPTION PHENOTYPE</scope>
</reference>
<reference key="6">
    <citation type="journal article" date="2020" name="Cell Rep.">
        <title>Plasma membrane furrows control plasticity of ER-PM contacts.</title>
        <authorList>
            <person name="Ng A.Q.E."/>
            <person name="Ng A.Y.E."/>
            <person name="Zhang D."/>
        </authorList>
    </citation>
    <scope>FUNCTION</scope>
    <scope>DISRUPTION PHENOTYPE</scope>
</reference>
<reference key="7">
    <citation type="journal article" date="2020" name="Mol. Cell">
        <title>A UPR-induced soluble ER-phagy receptor acts with VAPs to confer ER stress resistance.</title>
        <authorList>
            <person name="Zhao D."/>
            <person name="Zou C.X."/>
            <person name="Liu X.M."/>
            <person name="Jiang Z.D."/>
            <person name="Yu Z.Q."/>
            <person name="Suo F."/>
            <person name="Du T.Y."/>
            <person name="Dong M.Q."/>
            <person name="He W."/>
            <person name="Du L.L."/>
        </authorList>
    </citation>
    <scope>FUNCTION</scope>
    <scope>INTERACTION WITH EPR1</scope>
</reference>
<reference key="8">
    <citation type="journal article" date="2024" name="J. Cell Sci.">
        <title>Fission yeast Duc1 links to ER-PM contact sites and influences PM lipid composition and cytokinetic ring anchoring.</title>
        <authorList>
            <person name="Willet A.H."/>
            <person name="Park J.S."/>
            <person name="Snider C.E."/>
            <person name="Huang J.J."/>
            <person name="Chen J.S."/>
            <person name="Gould K.L."/>
        </authorList>
    </citation>
    <scope>DISRUPTION PHENOTYPE</scope>
</reference>
<comment type="function">
    <text evidence="6 7 8 9 11">Vesicle-associated membrane protein-associated protein (VAP) implicated in maintaining the cortical endoplasmic reticulum (ER)-plasma membrane (PM) attachment (PubMed:23041194, PubMed:26877082, PubMed:29290560, PubMed:32023460). ER-PM contacts function to modulate the distribution of contractile ring components to ensure robust ring assembly (PubMed:26877082). ER-PM contacts function also in controlling exocytosis and maintenance of cell polarity regulating cell shape (PubMed:29290560). VAPs play an important role in regulating eisosome assembly (PubMed:32023460). VAPs also contribute to ER-phagy by tethering atg8 to the ER membrane, but also by maintaining the ER-plasma membrane contact (Ref.7).</text>
</comment>
<comment type="subunit">
    <text evidence="11">Interacts with epr1.</text>
</comment>
<comment type="subcellular location">
    <subcellularLocation>
        <location evidence="6">Endoplasmic reticulum membrane</location>
        <topology evidence="2">Single-pass type IV membrane protein</topology>
    </subcellularLocation>
    <text evidence="6">Localizes at the cortical endoplasmic reticulum-plasma membrane contact sites.</text>
</comment>
<comment type="domain">
    <text evidence="1">The MSP domain is required for binding to the FFAT motif of target proteins.</text>
</comment>
<comment type="disruption phenotype">
    <text evidence="6 7 8 9 10">Leads to the dissociation of the cortical endoplasmic reticulum (ER) from the cell periphery and its accumulation in the cytoplasm, in particular in the vicinity of cell tips; when scs2 is also deleted (PubMed:23041194, PubMed:26877082, PubMed:29290560, PubMed:32023460, PubMed:39239853). Affects contractile ring assembly, contractile ring anchoring and displays severe cytokinetic defects; when scs2 is also deleted (PubMed:26877082, PubMed:39239853).</text>
</comment>
<comment type="similarity">
    <text evidence="12">Belongs to the VAMP-associated protein (VAP) (TC 9.B.17) family.</text>
</comment>